<protein>
    <recommendedName>
        <fullName evidence="1">Aspartate/glutamate leucyltransferase</fullName>
        <ecNumber evidence="1">2.3.2.29</ecNumber>
    </recommendedName>
</protein>
<dbReference type="EC" id="2.3.2.29" evidence="1"/>
<dbReference type="EMBL" id="CR555306">
    <property type="protein sequence ID" value="CAI08906.1"/>
    <property type="molecule type" value="Genomic_DNA"/>
</dbReference>
<dbReference type="RefSeq" id="WP_011238589.1">
    <property type="nucleotide sequence ID" value="NC_006513.1"/>
</dbReference>
<dbReference type="SMR" id="Q5P1A8"/>
<dbReference type="STRING" id="76114.ebA4890"/>
<dbReference type="KEGG" id="eba:ebA4890"/>
<dbReference type="eggNOG" id="COG2935">
    <property type="taxonomic scope" value="Bacteria"/>
</dbReference>
<dbReference type="HOGENOM" id="CLU_077607_0_0_4"/>
<dbReference type="OrthoDB" id="9782022at2"/>
<dbReference type="Proteomes" id="UP000006552">
    <property type="component" value="Chromosome"/>
</dbReference>
<dbReference type="GO" id="GO:0005737">
    <property type="term" value="C:cytoplasm"/>
    <property type="evidence" value="ECO:0007669"/>
    <property type="project" value="UniProtKB-SubCell"/>
</dbReference>
<dbReference type="GO" id="GO:0004057">
    <property type="term" value="F:arginyl-tRNA--protein transferase activity"/>
    <property type="evidence" value="ECO:0007669"/>
    <property type="project" value="InterPro"/>
</dbReference>
<dbReference type="GO" id="GO:0008914">
    <property type="term" value="F:leucyl-tRNA--protein transferase activity"/>
    <property type="evidence" value="ECO:0007669"/>
    <property type="project" value="UniProtKB-UniRule"/>
</dbReference>
<dbReference type="GO" id="GO:0071596">
    <property type="term" value="P:ubiquitin-dependent protein catabolic process via the N-end rule pathway"/>
    <property type="evidence" value="ECO:0007669"/>
    <property type="project" value="InterPro"/>
</dbReference>
<dbReference type="HAMAP" id="MF_00689">
    <property type="entry name" value="Bpt"/>
    <property type="match status" value="1"/>
</dbReference>
<dbReference type="InterPro" id="IPR016181">
    <property type="entry name" value="Acyl_CoA_acyltransferase"/>
</dbReference>
<dbReference type="InterPro" id="IPR017138">
    <property type="entry name" value="Asp_Glu_LeuTrfase"/>
</dbReference>
<dbReference type="InterPro" id="IPR030700">
    <property type="entry name" value="N-end_Aminoacyl_Trfase"/>
</dbReference>
<dbReference type="InterPro" id="IPR007472">
    <property type="entry name" value="N-end_Aminoacyl_Trfase_C"/>
</dbReference>
<dbReference type="InterPro" id="IPR007471">
    <property type="entry name" value="N-end_Aminoacyl_Trfase_N"/>
</dbReference>
<dbReference type="NCBIfam" id="NF002341">
    <property type="entry name" value="PRK01305.1-1"/>
    <property type="match status" value="1"/>
</dbReference>
<dbReference type="NCBIfam" id="NF002342">
    <property type="entry name" value="PRK01305.1-3"/>
    <property type="match status" value="1"/>
</dbReference>
<dbReference type="NCBIfam" id="NF002346">
    <property type="entry name" value="PRK01305.2-3"/>
    <property type="match status" value="1"/>
</dbReference>
<dbReference type="PANTHER" id="PTHR21367">
    <property type="entry name" value="ARGININE-TRNA-PROTEIN TRANSFERASE 1"/>
    <property type="match status" value="1"/>
</dbReference>
<dbReference type="PANTHER" id="PTHR21367:SF1">
    <property type="entry name" value="ARGINYL-TRNA--PROTEIN TRANSFERASE 1"/>
    <property type="match status" value="1"/>
</dbReference>
<dbReference type="Pfam" id="PF04377">
    <property type="entry name" value="ATE_C"/>
    <property type="match status" value="1"/>
</dbReference>
<dbReference type="Pfam" id="PF04376">
    <property type="entry name" value="ATE_N"/>
    <property type="match status" value="1"/>
</dbReference>
<dbReference type="PIRSF" id="PIRSF037208">
    <property type="entry name" value="ATE_pro_prd"/>
    <property type="match status" value="1"/>
</dbReference>
<dbReference type="SUPFAM" id="SSF55729">
    <property type="entry name" value="Acyl-CoA N-acyltransferases (Nat)"/>
    <property type="match status" value="1"/>
</dbReference>
<comment type="function">
    <text evidence="1">Functions in the N-end rule pathway of protein degradation where it conjugates Leu from its aminoacyl-tRNA to the N-termini of proteins containing an N-terminal aspartate or glutamate.</text>
</comment>
<comment type="catalytic activity">
    <reaction evidence="1">
        <text>N-terminal L-glutamyl-[protein] + L-leucyl-tRNA(Leu) = N-terminal L-leucyl-L-glutamyl-[protein] + tRNA(Leu) + H(+)</text>
        <dbReference type="Rhea" id="RHEA:50412"/>
        <dbReference type="Rhea" id="RHEA-COMP:9613"/>
        <dbReference type="Rhea" id="RHEA-COMP:9622"/>
        <dbReference type="Rhea" id="RHEA-COMP:12664"/>
        <dbReference type="Rhea" id="RHEA-COMP:12668"/>
        <dbReference type="ChEBI" id="CHEBI:15378"/>
        <dbReference type="ChEBI" id="CHEBI:64721"/>
        <dbReference type="ChEBI" id="CHEBI:78442"/>
        <dbReference type="ChEBI" id="CHEBI:78494"/>
        <dbReference type="ChEBI" id="CHEBI:133041"/>
        <dbReference type="EC" id="2.3.2.29"/>
    </reaction>
</comment>
<comment type="catalytic activity">
    <reaction evidence="1">
        <text>N-terminal L-aspartyl-[protein] + L-leucyl-tRNA(Leu) = N-terminal L-leucyl-L-aspartyl-[protein] + tRNA(Leu) + H(+)</text>
        <dbReference type="Rhea" id="RHEA:50420"/>
        <dbReference type="Rhea" id="RHEA-COMP:9613"/>
        <dbReference type="Rhea" id="RHEA-COMP:9622"/>
        <dbReference type="Rhea" id="RHEA-COMP:12669"/>
        <dbReference type="Rhea" id="RHEA-COMP:12674"/>
        <dbReference type="ChEBI" id="CHEBI:15378"/>
        <dbReference type="ChEBI" id="CHEBI:64720"/>
        <dbReference type="ChEBI" id="CHEBI:78442"/>
        <dbReference type="ChEBI" id="CHEBI:78494"/>
        <dbReference type="ChEBI" id="CHEBI:133042"/>
        <dbReference type="EC" id="2.3.2.29"/>
    </reaction>
</comment>
<comment type="subcellular location">
    <subcellularLocation>
        <location evidence="1">Cytoplasm</location>
    </subcellularLocation>
</comment>
<comment type="similarity">
    <text evidence="1">Belongs to the R-transferase family. Bpt subfamily.</text>
</comment>
<gene>
    <name evidence="1" type="primary">bpt</name>
    <name type="ordered locus">AZOSEA27810</name>
    <name type="ORF">ebA4890</name>
</gene>
<sequence length="246" mass="29226">MQKDYPYALIQFYATAPYTCSYLSDRVARSQVATPGHLIDTPVYSELVRNGFRRSGMFTYRPYCDHCRACVPVRIPVKRFEPDRSQRRAWKMHHELRANEQPLAYSEEHYALYQRYQGSRHAGGGMDQDNREQYAHFLLQSHVDTRLVEFREGDVLRMVSVIDRLSDGLSSVYTFYDPDQTHASYGTYGILWQIEVCRRLKLPYLYLGYWIKESRKMTYKVRFHPLEGRLRGEWRDIDPLRDRASE</sequence>
<name>BPT_AROAE</name>
<keyword id="KW-0012">Acyltransferase</keyword>
<keyword id="KW-0963">Cytoplasm</keyword>
<keyword id="KW-1185">Reference proteome</keyword>
<keyword id="KW-0808">Transferase</keyword>
<reference key="1">
    <citation type="journal article" date="2005" name="Arch. Microbiol.">
        <title>The genome sequence of an anaerobic aromatic-degrading denitrifying bacterium, strain EbN1.</title>
        <authorList>
            <person name="Rabus R."/>
            <person name="Kube M."/>
            <person name="Heider J."/>
            <person name="Beck A."/>
            <person name="Heitmann K."/>
            <person name="Widdel F."/>
            <person name="Reinhardt R."/>
        </authorList>
    </citation>
    <scope>NUCLEOTIDE SEQUENCE [LARGE SCALE GENOMIC DNA]</scope>
    <source>
        <strain>DSM 19018 / LMG 30748 / EbN1</strain>
    </source>
</reference>
<organism>
    <name type="scientific">Aromatoleum aromaticum (strain DSM 19018 / LMG 30748 / EbN1)</name>
    <name type="common">Azoarcus sp. (strain EbN1)</name>
    <dbReference type="NCBI Taxonomy" id="76114"/>
    <lineage>
        <taxon>Bacteria</taxon>
        <taxon>Pseudomonadati</taxon>
        <taxon>Pseudomonadota</taxon>
        <taxon>Betaproteobacteria</taxon>
        <taxon>Rhodocyclales</taxon>
        <taxon>Rhodocyclaceae</taxon>
        <taxon>Aromatoleum</taxon>
    </lineage>
</organism>
<proteinExistence type="inferred from homology"/>
<evidence type="ECO:0000255" key="1">
    <source>
        <dbReference type="HAMAP-Rule" id="MF_00689"/>
    </source>
</evidence>
<feature type="chain" id="PRO_0000263170" description="Aspartate/glutamate leucyltransferase">
    <location>
        <begin position="1"/>
        <end position="246"/>
    </location>
</feature>
<accession>Q5P1A8</accession>